<accession>F2JVT6</accession>
<sequence length="394" mass="46113">MSYPAFDSKTFLEAHIEKTMAFYFPTCIDPEGGFFQFFKDDGSVYDPNTRHLVSSTRFIFNFAQAYLHTNIAEYKHAAVHGIQYLRQRHQSQSGGYVWLLDGGTNLDETNHCYGLAFVILAYSNALQIGLSEAEVWIEVTYDLLETHFWENKHGLYLDEISSDWKTVSPYRGQNANMHMCEALMSAFDATQNPKYLDRAKLLAKNICQKQASLSNSNEVWEHYTNDWQIDWDYNKNDPKHLFRPWGFQPGHQTEWAKLLLMLDKRSPENWYLPKAKYLFDLAYKKAWDTKKGGLHYGYAPDGTVCDPDKYFWVQAESFAAAWLLYKATKDETYYKQYLTLWEFSWNHMIDHTFGAWYRILDENNAQYDNNKSPAGKTDYHTMGACYEVLKTLTL</sequence>
<organism>
    <name type="scientific">Marinomonas mediterranea (strain ATCC 700492 / JCM 21426 / NBRC 103028 / MMB-1)</name>
    <dbReference type="NCBI Taxonomy" id="717774"/>
    <lineage>
        <taxon>Bacteria</taxon>
        <taxon>Pseudomonadati</taxon>
        <taxon>Pseudomonadota</taxon>
        <taxon>Gammaproteobacteria</taxon>
        <taxon>Oceanospirillales</taxon>
        <taxon>Oceanospirillaceae</taxon>
        <taxon>Marinomonas</taxon>
    </lineage>
</organism>
<protein>
    <recommendedName>
        <fullName evidence="3">D-mannose isomerase</fullName>
        <shortName evidence="3">MI</shortName>
        <ecNumber evidence="2">5.3.1.7</ecNumber>
    </recommendedName>
</protein>
<gene>
    <name evidence="5" type="ordered locus">Marme_2490</name>
</gene>
<reference key="1">
    <citation type="journal article" date="2012" name="Stand. Genomic Sci.">
        <title>Complete genome sequence of the melanogenic marine bacterium Marinomonas mediterranea type strain (MMB-1(T)).</title>
        <authorList>
            <person name="Lucas-Elio P."/>
            <person name="Goodwin L."/>
            <person name="Woyke T."/>
            <person name="Pitluck S."/>
            <person name="Nolan M."/>
            <person name="Kyrpides N.C."/>
            <person name="Detter J.C."/>
            <person name="Copeland A."/>
            <person name="Teshima H."/>
            <person name="Bruce D."/>
            <person name="Detter C."/>
            <person name="Tapia R."/>
            <person name="Han S."/>
            <person name="Land M.L."/>
            <person name="Ivanova N."/>
            <person name="Mikhailova N."/>
            <person name="Johnston A.W."/>
            <person name="Sanchez-Amat A."/>
        </authorList>
    </citation>
    <scope>NUCLEOTIDE SEQUENCE [LARGE SCALE GENOMIC DNA]</scope>
    <source>
        <strain>ATCC 700492 / JCM 21426 / NBRC 103028 / MMB-1</strain>
    </source>
</reference>
<reference evidence="6" key="2">
    <citation type="journal article" date="2018" name="Biochimie">
        <title>Biochemical and structural characterization of Marinomonas mediterranead-mannose isomerase Marme_2490 phylogenetically distant from known enzymes.</title>
        <authorList>
            <person name="Saburi W."/>
            <person name="Jaito N."/>
            <person name="Kato K."/>
            <person name="Tanaka Y."/>
            <person name="Yao M."/>
            <person name="Mori H."/>
        </authorList>
    </citation>
    <scope>X-RAY CRYSTALLOGRAPHY (2.59 ANGSTROMS)</scope>
    <scope>FUNCTION</scope>
    <scope>CATALYTIC ACTIVITY</scope>
    <scope>BIOPHYSICOCHEMICAL PROPERTIES</scope>
    <scope>SUBUNIT</scope>
    <scope>DOMAIN</scope>
    <source>
        <strain>ATCC 700492 / JCM 21426 / NBRC 103028 / MMB-1</strain>
    </source>
</reference>
<feature type="chain" id="PRO_0000453301" description="D-mannose isomerase">
    <location>
        <begin position="1"/>
        <end position="394"/>
    </location>
</feature>
<feature type="active site" description="Proton donor/acceptor" evidence="1">
    <location>
        <position position="251"/>
    </location>
</feature>
<feature type="active site" description="Proton donor/acceptor" evidence="1">
    <location>
        <position position="380"/>
    </location>
</feature>
<feature type="helix" evidence="7">
    <location>
        <begin position="9"/>
        <end position="23"/>
    </location>
</feature>
<feature type="turn" evidence="7">
    <location>
        <begin position="24"/>
        <end position="27"/>
    </location>
</feature>
<feature type="strand" evidence="7">
    <location>
        <begin position="32"/>
        <end position="34"/>
    </location>
</feature>
<feature type="strand" evidence="7">
    <location>
        <begin position="47"/>
        <end position="51"/>
    </location>
</feature>
<feature type="helix" evidence="7">
    <location>
        <begin position="52"/>
        <end position="69"/>
    </location>
</feature>
<feature type="helix" evidence="7">
    <location>
        <begin position="72"/>
        <end position="88"/>
    </location>
</feature>
<feature type="strand" evidence="7">
    <location>
        <begin position="98"/>
        <end position="101"/>
    </location>
</feature>
<feature type="strand" evidence="7">
    <location>
        <begin position="104"/>
        <end position="107"/>
    </location>
</feature>
<feature type="helix" evidence="7">
    <location>
        <begin position="112"/>
        <end position="127"/>
    </location>
</feature>
<feature type="helix" evidence="7">
    <location>
        <begin position="133"/>
        <end position="147"/>
    </location>
</feature>
<feature type="turn" evidence="7">
    <location>
        <begin position="151"/>
        <end position="153"/>
    </location>
</feature>
<feature type="strand" evidence="7">
    <location>
        <begin position="154"/>
        <end position="156"/>
    </location>
</feature>
<feature type="helix" evidence="7">
    <location>
        <begin position="173"/>
        <end position="190"/>
    </location>
</feature>
<feature type="helix" evidence="7">
    <location>
        <begin position="193"/>
        <end position="207"/>
    </location>
</feature>
<feature type="helix" evidence="7">
    <location>
        <begin position="209"/>
        <end position="212"/>
    </location>
</feature>
<feature type="strand" evidence="7">
    <location>
        <begin position="221"/>
        <end position="223"/>
    </location>
</feature>
<feature type="strand" evidence="7">
    <location>
        <begin position="235"/>
        <end position="237"/>
    </location>
</feature>
<feature type="strand" evidence="7">
    <location>
        <begin position="241"/>
        <end position="243"/>
    </location>
</feature>
<feature type="helix" evidence="7">
    <location>
        <begin position="249"/>
        <end position="265"/>
    </location>
</feature>
<feature type="helix" evidence="7">
    <location>
        <begin position="271"/>
        <end position="286"/>
    </location>
</feature>
<feature type="turn" evidence="7">
    <location>
        <begin position="289"/>
        <end position="291"/>
    </location>
</feature>
<feature type="strand" evidence="7">
    <location>
        <begin position="296"/>
        <end position="298"/>
    </location>
</feature>
<feature type="strand" evidence="7">
    <location>
        <begin position="304"/>
        <end position="306"/>
    </location>
</feature>
<feature type="helix" evidence="7">
    <location>
        <begin position="311"/>
        <end position="328"/>
    </location>
</feature>
<feature type="helix" evidence="7">
    <location>
        <begin position="331"/>
        <end position="347"/>
    </location>
</feature>
<feature type="turn" evidence="7">
    <location>
        <begin position="351"/>
        <end position="353"/>
    </location>
</feature>
<feature type="strand" evidence="7">
    <location>
        <begin position="358"/>
        <end position="360"/>
    </location>
</feature>
<feature type="helix" evidence="7">
    <location>
        <begin position="379"/>
        <end position="390"/>
    </location>
</feature>
<proteinExistence type="evidence at protein level"/>
<keyword id="KW-0002">3D-structure</keyword>
<keyword id="KW-0413">Isomerase</keyword>
<keyword id="KW-1185">Reference proteome</keyword>
<evidence type="ECO:0000250" key="1">
    <source>
        <dbReference type="UniProtKB" id="Q8ZKT7"/>
    </source>
</evidence>
<evidence type="ECO:0000269" key="2">
    <source>
    </source>
</evidence>
<evidence type="ECO:0000303" key="3">
    <source>
    </source>
</evidence>
<evidence type="ECO:0000305" key="4"/>
<evidence type="ECO:0000312" key="5">
    <source>
        <dbReference type="EMBL" id="ADZ91722.1"/>
    </source>
</evidence>
<evidence type="ECO:0007744" key="6">
    <source>
        <dbReference type="PDB" id="5X32"/>
    </source>
</evidence>
<evidence type="ECO:0007829" key="7">
    <source>
        <dbReference type="PDB" id="5X32"/>
    </source>
</evidence>
<comment type="function">
    <text evidence="2">Catalyzes the reversible isomerization of D-mannose to D-fructose. Can also isomerize D-lyxose, with lower efficiency. In longer reaction with a higher concentration of enzyme, it can isomerize 4-OH D-mannose derivatives (D-talose and 4-O-monosaccharyl-D-mannose). Cannot use D-glucose.</text>
</comment>
<comment type="catalytic activity">
    <reaction evidence="2">
        <text>D-mannose = D-fructose</text>
        <dbReference type="Rhea" id="RHEA:22604"/>
        <dbReference type="ChEBI" id="CHEBI:4208"/>
        <dbReference type="ChEBI" id="CHEBI:37721"/>
        <dbReference type="EC" id="5.3.1.7"/>
    </reaction>
</comment>
<comment type="catalytic activity">
    <reaction evidence="2">
        <text>D-lyxose = D-xylulose</text>
        <dbReference type="Rhea" id="RHEA:14201"/>
        <dbReference type="ChEBI" id="CHEBI:16789"/>
        <dbReference type="ChEBI" id="CHEBI:17140"/>
    </reaction>
</comment>
<comment type="biophysicochemical properties">
    <kinetics>
        <KM evidence="2">16.7 mM for D-mannose</KM>
        <KM evidence="2">42.3 mM for D-lyxose</KM>
        <KM evidence="2">27.8 mM for D-talose</KM>
        <text evidence="2">kcat is 329 sec(-1) with D-mannose as substrate. kcat is 64.4 sec(-1) with D-lyxose as substrate. kcat is 0.319 sec(-1) with D-talose as substrate.</text>
    </kinetics>
    <phDependence>
        <text evidence="2">Optimum pH is 7.3 with D-mannose as substrate.</text>
    </phDependence>
    <temperatureDependence>
        <text evidence="2">Optimum temperature is 30 degrees Celsius with D-mannose as substrate.</text>
    </temperatureDependence>
</comment>
<comment type="subunit">
    <text evidence="2">Monomer.</text>
</comment>
<comment type="domain">
    <text evidence="2">The alpha7-alpha8 and alpha11-alpha12 loops of the catalytic domain may participate in the formation of an open substrate-binding site to provide sufficient space to bind 4-OH D-mannose derivatives.</text>
</comment>
<comment type="similarity">
    <text evidence="4">Belongs to the N-acylglucosamine 2-epimerase family.</text>
</comment>
<dbReference type="EC" id="5.3.1.7" evidence="2"/>
<dbReference type="EMBL" id="CP002583">
    <property type="protein sequence ID" value="ADZ91722.1"/>
    <property type="molecule type" value="Genomic_DNA"/>
</dbReference>
<dbReference type="RefSeq" id="WP_013661626.1">
    <property type="nucleotide sequence ID" value="NC_015276.1"/>
</dbReference>
<dbReference type="PDB" id="5X32">
    <property type="method" value="X-ray"/>
    <property type="resolution" value="2.59 A"/>
    <property type="chains" value="A/B=1-394"/>
</dbReference>
<dbReference type="PDBsum" id="5X32"/>
<dbReference type="SMR" id="F2JVT6"/>
<dbReference type="STRING" id="717774.Marme_2490"/>
<dbReference type="KEGG" id="mme:Marme_2490"/>
<dbReference type="PATRIC" id="fig|717774.3.peg.2575"/>
<dbReference type="eggNOG" id="COG2942">
    <property type="taxonomic scope" value="Bacteria"/>
</dbReference>
<dbReference type="HOGENOM" id="CLU_042253_1_0_6"/>
<dbReference type="OrthoDB" id="9806359at2"/>
<dbReference type="Proteomes" id="UP000001062">
    <property type="component" value="Chromosome"/>
</dbReference>
<dbReference type="GO" id="GO:0016853">
    <property type="term" value="F:isomerase activity"/>
    <property type="evidence" value="ECO:0007669"/>
    <property type="project" value="UniProtKB-KW"/>
</dbReference>
<dbReference type="GO" id="GO:0005975">
    <property type="term" value="P:carbohydrate metabolic process"/>
    <property type="evidence" value="ECO:0007669"/>
    <property type="project" value="InterPro"/>
</dbReference>
<dbReference type="CDD" id="cd00249">
    <property type="entry name" value="AGE"/>
    <property type="match status" value="1"/>
</dbReference>
<dbReference type="FunFam" id="1.50.10.10:FF:000057">
    <property type="entry name" value="N-acylglucosamine 2-epimerase"/>
    <property type="match status" value="1"/>
</dbReference>
<dbReference type="Gene3D" id="1.50.10.10">
    <property type="match status" value="1"/>
</dbReference>
<dbReference type="InterPro" id="IPR008928">
    <property type="entry name" value="6-hairpin_glycosidase_sf"/>
</dbReference>
<dbReference type="InterPro" id="IPR012341">
    <property type="entry name" value="6hp_glycosidase-like_sf"/>
</dbReference>
<dbReference type="InterPro" id="IPR010819">
    <property type="entry name" value="AGE/CE"/>
</dbReference>
<dbReference type="InterPro" id="IPR034116">
    <property type="entry name" value="AGE_dom"/>
</dbReference>
<dbReference type="PANTHER" id="PTHR15108">
    <property type="entry name" value="N-ACYLGLUCOSAMINE-2-EPIMERASE"/>
    <property type="match status" value="1"/>
</dbReference>
<dbReference type="Pfam" id="PF07221">
    <property type="entry name" value="GlcNAc_2-epim"/>
    <property type="match status" value="1"/>
</dbReference>
<dbReference type="SUPFAM" id="SSF48208">
    <property type="entry name" value="Six-hairpin glycosidases"/>
    <property type="match status" value="1"/>
</dbReference>
<name>MANI_MARM1</name>